<protein>
    <recommendedName>
        <fullName evidence="4">Phospholipid-transporting ATPase IB</fullName>
        <ecNumber evidence="8 10 11 12 13">7.6.2.1</ecNumber>
    </recommendedName>
    <alternativeName>
        <fullName>ATPase class I type 8A member 2</fullName>
    </alternativeName>
    <alternativeName>
        <fullName>P4-ATPase flippase complex alpha subunit ATP8A2</fullName>
    </alternativeName>
</protein>
<keyword id="KW-0067">ATP-binding</keyword>
<keyword id="KW-1003">Cell membrane</keyword>
<keyword id="KW-0966">Cell projection</keyword>
<keyword id="KW-0967">Endosome</keyword>
<keyword id="KW-0333">Golgi apparatus</keyword>
<keyword id="KW-0445">Lipid transport</keyword>
<keyword id="KW-0460">Magnesium</keyword>
<keyword id="KW-0472">Membrane</keyword>
<keyword id="KW-0479">Metal-binding</keyword>
<keyword id="KW-0547">Nucleotide-binding</keyword>
<keyword id="KW-0597">Phosphoprotein</keyword>
<keyword id="KW-1185">Reference proteome</keyword>
<keyword id="KW-1278">Translocase</keyword>
<keyword id="KW-0812">Transmembrane</keyword>
<keyword id="KW-1133">Transmembrane helix</keyword>
<keyword id="KW-0813">Transport</keyword>
<evidence type="ECO:0000250" key="1">
    <source>
        <dbReference type="UniProtKB" id="P04191"/>
    </source>
</evidence>
<evidence type="ECO:0000250" key="2">
    <source>
        <dbReference type="UniProtKB" id="P98200"/>
    </source>
</evidence>
<evidence type="ECO:0000250" key="3">
    <source>
        <dbReference type="UniProtKB" id="Q8NB49"/>
    </source>
</evidence>
<evidence type="ECO:0000250" key="4">
    <source>
        <dbReference type="UniProtKB" id="Q9NTI2"/>
    </source>
</evidence>
<evidence type="ECO:0000250" key="5">
    <source>
        <dbReference type="UniProtKB" id="Q9Y2Q0"/>
    </source>
</evidence>
<evidence type="ECO:0000255" key="6"/>
<evidence type="ECO:0000256" key="7">
    <source>
        <dbReference type="SAM" id="MobiDB-lite"/>
    </source>
</evidence>
<evidence type="ECO:0000269" key="8">
    <source>
    </source>
</evidence>
<evidence type="ECO:0000269" key="9">
    <source>
    </source>
</evidence>
<evidence type="ECO:0000269" key="10">
    <source>
    </source>
</evidence>
<evidence type="ECO:0000269" key="11">
    <source>
    </source>
</evidence>
<evidence type="ECO:0000269" key="12">
    <source>
    </source>
</evidence>
<evidence type="ECO:0000269" key="13">
    <source>
    </source>
</evidence>
<evidence type="ECO:0000305" key="14"/>
<evidence type="ECO:0000305" key="15">
    <source>
    </source>
</evidence>
<evidence type="ECO:0000305" key="16">
    <source>
    </source>
</evidence>
<evidence type="ECO:0000305" key="17">
    <source>
    </source>
</evidence>
<reference key="1">
    <citation type="journal article" date="2009" name="J. Biol. Chem.">
        <title>Localization, purification, and functional reconstitution of the P4-ATPase Atp8a2, a phosphatidylserine flippase in photoreceptor disc membranes.</title>
        <authorList>
            <person name="Coleman J.A."/>
            <person name="Kwok M.C."/>
            <person name="Molday R.S."/>
        </authorList>
    </citation>
    <scope>NUCLEOTIDE SEQUENCE [MRNA]</scope>
    <scope>FUNCTION</scope>
    <scope>CATALYTIC ACTIVITY</scope>
    <scope>ACTIVITY REGULATION</scope>
    <scope>SUBCELLULAR LOCATION</scope>
    <scope>TISSUE SPECIFICITY</scope>
    <source>
        <tissue>Retina</tissue>
    </source>
</reference>
<reference key="2">
    <citation type="journal article" date="2011" name="J. Biol. Chem.">
        <title>Critical role of the beta-subunit CDC50A in the stable expression, assembly, subcellular localization, and lipid transport activity of the P4-ATPase ATP8A2.</title>
        <authorList>
            <person name="Coleman J.A."/>
            <person name="Molday R.S."/>
        </authorList>
    </citation>
    <scope>FUNCTION OF THE ATP8A2:TMEM30A FLIPPASE COMPLEX</scope>
    <scope>IDENTIFICATION IN ATP8A2:TMEM30A FLIPPASE COMPLEX</scope>
    <scope>SUBCELLULAR LOCATION</scope>
</reference>
<reference key="3">
    <citation type="journal article" date="2012" name="Proc. Natl. Acad. Sci. U.S.A.">
        <title>Critical role of a transmembrane lysine in aminophospholipid transport by mammalian photoreceptor P4-ATPase ATP8A2.</title>
        <authorList>
            <person name="Coleman J.A."/>
            <person name="Vestergaard A.L."/>
            <person name="Molday R.S."/>
            <person name="Vilsen B."/>
            <person name="Andersen J.P."/>
        </authorList>
    </citation>
    <scope>CATALYTIC ACTIVITY</scope>
    <scope>REACTION MECHANISM</scope>
    <scope>MUTAGENESIS OF ASP-168; GLU-170; ASP-388; LYS-837; LYS-845 AND ASN-846</scope>
</reference>
<reference key="4">
    <citation type="journal article" date="2014" name="Proc. Natl. Acad. Sci. U.S.A.">
        <title>Critical roles of isoleucine-364 and adjacent residues in a hydrophobic gate control of phospholipid transport by the mammalian P4-ATPase ATP8A2.</title>
        <authorList>
            <person name="Vestergaard A.L."/>
            <person name="Coleman J.A."/>
            <person name="Lemmin T."/>
            <person name="Mikkelsen S.A."/>
            <person name="Molday L.L."/>
            <person name="Vilsen B."/>
            <person name="Molday R.S."/>
            <person name="Dal Peraro M."/>
            <person name="Andersen J.P."/>
        </authorList>
    </citation>
    <scope>MUTAGENESIS OF PHE-60; LEU-84; ILE-87; PHE-326; TYR-330; ASN-331; ASN-332; LEU-333; ILE-334; ILE-336; SER-337; LEU-339; THR-341; GLU-343 AND LYS-346</scope>
    <scope>SITE</scope>
    <scope>CATALYTIC ACTIVITY</scope>
    <scope>FUNCTION</scope>
</reference>
<reference key="5">
    <citation type="journal article" date="2015" name="FEBS Lett.">
        <title>Specific mutations in mammalian P4-ATPase ATP8A2 catalytic subunit entail differential glycosylation of the accessory CDC50A subunit.</title>
        <authorList>
            <person name="Vestergaard A.L."/>
            <person name="Mikkelsen S.A."/>
            <person name="Coleman J.A."/>
            <person name="Molday R.S."/>
            <person name="Vilsen B."/>
            <person name="Andersen J.P."/>
        </authorList>
    </citation>
    <scope>COMPONENT OF A P4-ATPASE FLIPPASE COMPLEX</scope>
    <scope>MUTAGENESIS OF GLU-98; ILE-277; LEU-333; LEU-338; LEU-339 AND TYR-850</scope>
    <scope>CATALYTIC ACTIVITY</scope>
    <scope>FUNCTION</scope>
</reference>
<reference key="6">
    <citation type="journal article" date="2019" name="Proc. Natl. Acad. Sci. U.S.A.">
        <title>Phosphatidylserine flipping by the P4-ATPase ATP8A2 is electrogenic.</title>
        <authorList>
            <person name="Tadini-Buoninsegni F."/>
            <person name="Mikkelsen S.A."/>
            <person name="Mogensen L.S."/>
            <person name="Molday R.S."/>
            <person name="Andersen J.P."/>
        </authorList>
    </citation>
    <scope>FUNCTION</scope>
    <scope>CATALYTIC ACTIVITY</scope>
</reference>
<accession>C7EXK4</accession>
<sequence>MSRATSVGDQLDVPARTIYLNQPHLNKFCDNQISTAKYSVVTFLPRFLYEQIRRAANAFFLFIALLQQIPDVSPTGRYTTLVPLIIILTIAGIKEIVEDFKRHKADNAVNKKKTIVLRNGMWQTIVWKEVAVGDIVKVVNGQYLPADVVLLSSSEPQAMCYVETANLDGETNLKIRQGLSHTADMQTREVLMKLSGTIECEGPNRHLYDFTGNLNLDGKSPVALGPDQILLRGTQLRNTQWGFGIVVYTGHDTKLMQNSTKAPLKRSNVEKVTNVQILVLFGILLVMALVSSVGALYWNGSQGGKNWYIKKMDATSDNFGYNLLTFIILYNNLIPISLLVTLEVVKYTQALFINWDTDMYYLGNDTPAMARTSNLNEELGQVKYLFSDKTGTLTCNIMNFKKCSIAGVTYGHFPELTREPSSDDFSRIPPPPSDSCDFDDPRLLKNIEDHHPTAPCIQEFLTLLAVCHTVVPERDGDSIVYQASSPDEAALVKGARKLGFVFTARTPYSVIIEAMGQEQTFGILNVLEFSSDRKRMSVIVRTPSGQLRLYCKGADNVIFERLSKDSKYMEETLCHLEYFATEGLRTLCVAYADLSERDYEEWLKVYQEASTILKDRAQRLEECYEIIEKNLLLLGATAIEDRLQAGVPETIATLLKAEIKIWVLTGDKQETAINIGYSCRLVSQNMALILLKEDSLDATRAAITQHCADLGSLLGKENDAALIIDGHTLKYALSFEVRRSFLDLALSCKAVICCRVSPLQKSEIVDVVKKRVKAITLAIGDGANDVGMIQTAHVGVGISGNEGMQATNNSDYAIAQFSYLEKLLLVHGAWSYNRVTKCILYCFYKNVVLYIIELWFAFVNGFSGQILFERWCIGLYNVIFTALPPFTLGIFERSCSQESMLRFPQLYKITQNAEGFNTKVFWGHCINALVHSLILFWFPMKALEHDTVLANGHATDYLFVGNIVYTYVVVTVCLKAGLETTAWTKFSHLAVWGSMLIWLVFFGIYSTIWPTIPIAPDMKGQATMVLSSAHFWLGLFLVPTACLIEDVAWRAAKHTCKKTLLEEVQELEMKSRVMGRAMLRDSNGKRMNERDRLLKRLSRKTPPTLFRGSSLQQSMPHGYAFSQEEHGAVTQEEIVRAYDTTKQKSRKK</sequence>
<organism>
    <name type="scientific">Bos taurus</name>
    <name type="common">Bovine</name>
    <dbReference type="NCBI Taxonomy" id="9913"/>
    <lineage>
        <taxon>Eukaryota</taxon>
        <taxon>Metazoa</taxon>
        <taxon>Chordata</taxon>
        <taxon>Craniata</taxon>
        <taxon>Vertebrata</taxon>
        <taxon>Euteleostomi</taxon>
        <taxon>Mammalia</taxon>
        <taxon>Eutheria</taxon>
        <taxon>Laurasiatheria</taxon>
        <taxon>Artiodactyla</taxon>
        <taxon>Ruminantia</taxon>
        <taxon>Pecora</taxon>
        <taxon>Bovidae</taxon>
        <taxon>Bovinae</taxon>
        <taxon>Bos</taxon>
    </lineage>
</organism>
<proteinExistence type="evidence at protein level"/>
<dbReference type="EC" id="7.6.2.1" evidence="8 10 11 12 13"/>
<dbReference type="EMBL" id="GQ303567">
    <property type="protein sequence ID" value="ACT46164.3"/>
    <property type="status" value="ALT_INIT"/>
    <property type="molecule type" value="mRNA"/>
</dbReference>
<dbReference type="RefSeq" id="NP_001157274.3">
    <property type="nucleotide sequence ID" value="NM_001163802.3"/>
</dbReference>
<dbReference type="RefSeq" id="XP_024855588.1">
    <property type="nucleotide sequence ID" value="XM_024999820.2"/>
</dbReference>
<dbReference type="SMR" id="C7EXK4"/>
<dbReference type="FunCoup" id="C7EXK4">
    <property type="interactions" value="1256"/>
</dbReference>
<dbReference type="STRING" id="9913.ENSBTAP00000053709"/>
<dbReference type="SwissLipids" id="SLP:000000379"/>
<dbReference type="SwissPalm" id="C7EXK4"/>
<dbReference type="GeneID" id="508723"/>
<dbReference type="KEGG" id="bta:508723"/>
<dbReference type="CTD" id="51761"/>
<dbReference type="InParanoid" id="C7EXK4"/>
<dbReference type="OrthoDB" id="377733at2759"/>
<dbReference type="BRENDA" id="7.6.2.1">
    <property type="organism ID" value="908"/>
</dbReference>
<dbReference type="Proteomes" id="UP000009136">
    <property type="component" value="Unplaced"/>
</dbReference>
<dbReference type="GO" id="GO:0010008">
    <property type="term" value="C:endosome membrane"/>
    <property type="evidence" value="ECO:0007669"/>
    <property type="project" value="UniProtKB-SubCell"/>
</dbReference>
<dbReference type="GO" id="GO:0000139">
    <property type="term" value="C:Golgi membrane"/>
    <property type="evidence" value="ECO:0007669"/>
    <property type="project" value="UniProtKB-SubCell"/>
</dbReference>
<dbReference type="GO" id="GO:0097381">
    <property type="term" value="C:photoreceptor disc membrane"/>
    <property type="evidence" value="ECO:0000314"/>
    <property type="project" value="UniProtKB"/>
</dbReference>
<dbReference type="GO" id="GO:0005886">
    <property type="term" value="C:plasma membrane"/>
    <property type="evidence" value="ECO:0000318"/>
    <property type="project" value="GO_Central"/>
</dbReference>
<dbReference type="GO" id="GO:0005802">
    <property type="term" value="C:trans-Golgi network"/>
    <property type="evidence" value="ECO:0000318"/>
    <property type="project" value="GO_Central"/>
</dbReference>
<dbReference type="GO" id="GO:0005524">
    <property type="term" value="F:ATP binding"/>
    <property type="evidence" value="ECO:0007669"/>
    <property type="project" value="UniProtKB-KW"/>
</dbReference>
<dbReference type="GO" id="GO:0016887">
    <property type="term" value="F:ATP hydrolysis activity"/>
    <property type="evidence" value="ECO:0007669"/>
    <property type="project" value="InterPro"/>
</dbReference>
<dbReference type="GO" id="GO:0140326">
    <property type="term" value="F:ATPase-coupled intramembrane lipid transporter activity"/>
    <property type="evidence" value="ECO:0000318"/>
    <property type="project" value="GO_Central"/>
</dbReference>
<dbReference type="GO" id="GO:0000287">
    <property type="term" value="F:magnesium ion binding"/>
    <property type="evidence" value="ECO:0007669"/>
    <property type="project" value="InterPro"/>
</dbReference>
<dbReference type="GO" id="GO:0090555">
    <property type="term" value="F:phosphatidylethanolamine flippase activity"/>
    <property type="evidence" value="ECO:0000314"/>
    <property type="project" value="UniProtKB"/>
</dbReference>
<dbReference type="GO" id="GO:0140346">
    <property type="term" value="F:phosphatidylserine flippase activity"/>
    <property type="evidence" value="ECO:0000314"/>
    <property type="project" value="UniProtKB"/>
</dbReference>
<dbReference type="GO" id="GO:0090556">
    <property type="term" value="F:phosphatidylserine floppase activity"/>
    <property type="evidence" value="ECO:0000314"/>
    <property type="project" value="GO_Central"/>
</dbReference>
<dbReference type="GO" id="GO:0140331">
    <property type="term" value="P:aminophospholipid translocation"/>
    <property type="evidence" value="ECO:0000314"/>
    <property type="project" value="UniProtKB"/>
</dbReference>
<dbReference type="GO" id="GO:0048666">
    <property type="term" value="P:neuron development"/>
    <property type="evidence" value="ECO:0000318"/>
    <property type="project" value="GO_Central"/>
</dbReference>
<dbReference type="GO" id="GO:0045332">
    <property type="term" value="P:phospholipid translocation"/>
    <property type="evidence" value="ECO:0000318"/>
    <property type="project" value="GO_Central"/>
</dbReference>
<dbReference type="CDD" id="cd02073">
    <property type="entry name" value="P-type_ATPase_APLT_Dnf-like"/>
    <property type="match status" value="1"/>
</dbReference>
<dbReference type="FunFam" id="2.70.150.10:FF:000021">
    <property type="entry name" value="Phospholipid-transporting ATPase"/>
    <property type="match status" value="1"/>
</dbReference>
<dbReference type="FunFam" id="3.40.1110.10:FF:000010">
    <property type="entry name" value="Phospholipid-transporting ATPase"/>
    <property type="match status" value="1"/>
</dbReference>
<dbReference type="FunFam" id="3.40.50.1000:FF:000010">
    <property type="entry name" value="Phospholipid-transporting ATPase"/>
    <property type="match status" value="1"/>
</dbReference>
<dbReference type="Gene3D" id="3.40.1110.10">
    <property type="entry name" value="Calcium-transporting ATPase, cytoplasmic domain N"/>
    <property type="match status" value="1"/>
</dbReference>
<dbReference type="Gene3D" id="2.70.150.10">
    <property type="entry name" value="Calcium-transporting ATPase, cytoplasmic transduction domain A"/>
    <property type="match status" value="1"/>
</dbReference>
<dbReference type="Gene3D" id="3.40.50.1000">
    <property type="entry name" value="HAD superfamily/HAD-like"/>
    <property type="match status" value="1"/>
</dbReference>
<dbReference type="InterPro" id="IPR023299">
    <property type="entry name" value="ATPase_P-typ_cyto_dom_N"/>
</dbReference>
<dbReference type="InterPro" id="IPR018303">
    <property type="entry name" value="ATPase_P-typ_P_site"/>
</dbReference>
<dbReference type="InterPro" id="IPR023298">
    <property type="entry name" value="ATPase_P-typ_TM_dom_sf"/>
</dbReference>
<dbReference type="InterPro" id="IPR008250">
    <property type="entry name" value="ATPase_P-typ_transduc_dom_A_sf"/>
</dbReference>
<dbReference type="InterPro" id="IPR036412">
    <property type="entry name" value="HAD-like_sf"/>
</dbReference>
<dbReference type="InterPro" id="IPR023214">
    <property type="entry name" value="HAD_sf"/>
</dbReference>
<dbReference type="InterPro" id="IPR006539">
    <property type="entry name" value="P-type_ATPase_IV"/>
</dbReference>
<dbReference type="InterPro" id="IPR032631">
    <property type="entry name" value="P-type_ATPase_N"/>
</dbReference>
<dbReference type="InterPro" id="IPR001757">
    <property type="entry name" value="P_typ_ATPase"/>
</dbReference>
<dbReference type="InterPro" id="IPR032630">
    <property type="entry name" value="P_typ_ATPase_c"/>
</dbReference>
<dbReference type="InterPro" id="IPR044492">
    <property type="entry name" value="P_typ_ATPase_HD_dom"/>
</dbReference>
<dbReference type="NCBIfam" id="TIGR01652">
    <property type="entry name" value="ATPase-Plipid"/>
    <property type="match status" value="1"/>
</dbReference>
<dbReference type="NCBIfam" id="TIGR01494">
    <property type="entry name" value="ATPase_P-type"/>
    <property type="match status" value="2"/>
</dbReference>
<dbReference type="PANTHER" id="PTHR24092:SF98">
    <property type="entry name" value="PHOSPHOLIPID-TRANSPORTING ATPASE IB"/>
    <property type="match status" value="1"/>
</dbReference>
<dbReference type="PANTHER" id="PTHR24092">
    <property type="entry name" value="PROBABLE PHOSPHOLIPID-TRANSPORTING ATPASE"/>
    <property type="match status" value="1"/>
</dbReference>
<dbReference type="Pfam" id="PF13246">
    <property type="entry name" value="Cation_ATPase"/>
    <property type="match status" value="1"/>
</dbReference>
<dbReference type="Pfam" id="PF00122">
    <property type="entry name" value="E1-E2_ATPase"/>
    <property type="match status" value="1"/>
</dbReference>
<dbReference type="Pfam" id="PF16212">
    <property type="entry name" value="PhoLip_ATPase_C"/>
    <property type="match status" value="1"/>
</dbReference>
<dbReference type="Pfam" id="PF16209">
    <property type="entry name" value="PhoLip_ATPase_N"/>
    <property type="match status" value="1"/>
</dbReference>
<dbReference type="PRINTS" id="PR00119">
    <property type="entry name" value="CATATPASE"/>
</dbReference>
<dbReference type="SFLD" id="SFLDG00002">
    <property type="entry name" value="C1.7:_P-type_atpase_like"/>
    <property type="match status" value="1"/>
</dbReference>
<dbReference type="SFLD" id="SFLDF00027">
    <property type="entry name" value="p-type_atpase"/>
    <property type="match status" value="1"/>
</dbReference>
<dbReference type="SUPFAM" id="SSF81653">
    <property type="entry name" value="Calcium ATPase, transduction domain A"/>
    <property type="match status" value="1"/>
</dbReference>
<dbReference type="SUPFAM" id="SSF81665">
    <property type="entry name" value="Calcium ATPase, transmembrane domain M"/>
    <property type="match status" value="1"/>
</dbReference>
<dbReference type="SUPFAM" id="SSF56784">
    <property type="entry name" value="HAD-like"/>
    <property type="match status" value="1"/>
</dbReference>
<dbReference type="SUPFAM" id="SSF81660">
    <property type="entry name" value="Metal cation-transporting ATPase, ATP-binding domain N"/>
    <property type="match status" value="1"/>
</dbReference>
<dbReference type="PROSITE" id="PS00154">
    <property type="entry name" value="ATPASE_E1_E2"/>
    <property type="match status" value="1"/>
</dbReference>
<feature type="chain" id="PRO_0000429838" description="Phospholipid-transporting ATPase IB">
    <location>
        <begin position="1"/>
        <end position="1148"/>
    </location>
</feature>
<feature type="topological domain" description="Cytoplasmic" evidence="6">
    <location>
        <begin position="1"/>
        <end position="54"/>
    </location>
</feature>
<feature type="transmembrane region" description="Helical" evidence="6">
    <location>
        <begin position="55"/>
        <end position="75"/>
    </location>
</feature>
<feature type="topological domain" description="Exoplasmic loop" evidence="6">
    <location>
        <begin position="76"/>
        <end position="79"/>
    </location>
</feature>
<feature type="transmembrane region" description="Helical" evidence="6">
    <location>
        <begin position="80"/>
        <end position="100"/>
    </location>
</feature>
<feature type="topological domain" description="Cytoplasmic" evidence="6">
    <location>
        <begin position="101"/>
        <end position="276"/>
    </location>
</feature>
<feature type="transmembrane region" description="Helical" evidence="6">
    <location>
        <begin position="277"/>
        <end position="297"/>
    </location>
</feature>
<feature type="topological domain" description="Exoplasmic loop" evidence="6">
    <location>
        <begin position="298"/>
        <end position="324"/>
    </location>
</feature>
<feature type="transmembrane region" description="Helical" evidence="6">
    <location>
        <begin position="325"/>
        <end position="345"/>
    </location>
</feature>
<feature type="topological domain" description="Cytoplasmic" evidence="6">
    <location>
        <begin position="346"/>
        <end position="847"/>
    </location>
</feature>
<feature type="transmembrane region" description="Helical" evidence="6">
    <location>
        <begin position="848"/>
        <end position="868"/>
    </location>
</feature>
<feature type="topological domain" description="Exoplasmic loop" evidence="6">
    <location>
        <begin position="869"/>
        <end position="870"/>
    </location>
</feature>
<feature type="transmembrane region" description="Helical" evidence="6">
    <location>
        <begin position="871"/>
        <end position="891"/>
    </location>
</feature>
<feature type="topological domain" description="Cytoplasmic" evidence="6">
    <location>
        <begin position="892"/>
        <end position="919"/>
    </location>
</feature>
<feature type="transmembrane region" description="Helical" evidence="6">
    <location>
        <begin position="920"/>
        <end position="940"/>
    </location>
</feature>
<feature type="topological domain" description="Exoplasmic loop" evidence="6">
    <location>
        <begin position="941"/>
        <end position="957"/>
    </location>
</feature>
<feature type="transmembrane region" description="Helical" evidence="6">
    <location>
        <begin position="958"/>
        <end position="978"/>
    </location>
</feature>
<feature type="topological domain" description="Cytoplasmic" evidence="6">
    <location>
        <begin position="979"/>
        <end position="988"/>
    </location>
</feature>
<feature type="transmembrane region" description="Helical" evidence="6">
    <location>
        <begin position="989"/>
        <end position="1009"/>
    </location>
</feature>
<feature type="topological domain" description="Exoplasmic loop" evidence="6">
    <location>
        <begin position="1010"/>
        <end position="1023"/>
    </location>
</feature>
<feature type="transmembrane region" description="Helical" evidence="6">
    <location>
        <begin position="1024"/>
        <end position="1044"/>
    </location>
</feature>
<feature type="topological domain" description="Cytoplasmic" evidence="6">
    <location>
        <begin position="1045"/>
        <end position="1148"/>
    </location>
</feature>
<feature type="region of interest" description="Disordered" evidence="7">
    <location>
        <begin position="1102"/>
        <end position="1126"/>
    </location>
</feature>
<feature type="active site" description="4-aspartylphosphate intermediate" evidence="14">
    <location>
        <position position="388"/>
    </location>
</feature>
<feature type="binding site" evidence="5">
    <location>
        <position position="388"/>
    </location>
    <ligand>
        <name>ATP</name>
        <dbReference type="ChEBI" id="CHEBI:30616"/>
    </ligand>
</feature>
<feature type="binding site" evidence="5">
    <location>
        <position position="388"/>
    </location>
    <ligand>
        <name>Mg(2+)</name>
        <dbReference type="ChEBI" id="CHEBI:18420"/>
    </ligand>
</feature>
<feature type="binding site" evidence="5">
    <location>
        <position position="389"/>
    </location>
    <ligand>
        <name>ATP</name>
        <dbReference type="ChEBI" id="CHEBI:30616"/>
    </ligand>
</feature>
<feature type="binding site" evidence="1">
    <location>
        <position position="390"/>
    </location>
    <ligand>
        <name>ATP</name>
        <dbReference type="ChEBI" id="CHEBI:30616"/>
    </ligand>
</feature>
<feature type="binding site" evidence="5">
    <location>
        <position position="390"/>
    </location>
    <ligand>
        <name>Mg(2+)</name>
        <dbReference type="ChEBI" id="CHEBI:18420"/>
    </ligand>
</feature>
<feature type="binding site" evidence="1">
    <location>
        <position position="488"/>
    </location>
    <ligand>
        <name>ATP</name>
        <dbReference type="ChEBI" id="CHEBI:30616"/>
    </ligand>
</feature>
<feature type="binding site" evidence="5">
    <location>
        <position position="529"/>
    </location>
    <ligand>
        <name>ATP</name>
        <dbReference type="ChEBI" id="CHEBI:30616"/>
    </ligand>
</feature>
<feature type="binding site" evidence="1">
    <location>
        <position position="552"/>
    </location>
    <ligand>
        <name>ATP</name>
        <dbReference type="ChEBI" id="CHEBI:30616"/>
    </ligand>
</feature>
<feature type="binding site" evidence="1">
    <location>
        <position position="585"/>
    </location>
    <ligand>
        <name>ATP</name>
        <dbReference type="ChEBI" id="CHEBI:30616"/>
    </ligand>
</feature>
<feature type="binding site" evidence="1">
    <location>
        <position position="665"/>
    </location>
    <ligand>
        <name>ATP</name>
        <dbReference type="ChEBI" id="CHEBI:30616"/>
    </ligand>
</feature>
<feature type="binding site" evidence="1">
    <location>
        <position position="666"/>
    </location>
    <ligand>
        <name>ATP</name>
        <dbReference type="ChEBI" id="CHEBI:30616"/>
    </ligand>
</feature>
<feature type="binding site" evidence="1">
    <location>
        <position position="667"/>
    </location>
    <ligand>
        <name>ATP</name>
        <dbReference type="ChEBI" id="CHEBI:30616"/>
    </ligand>
</feature>
<feature type="binding site" evidence="1">
    <location>
        <position position="755"/>
    </location>
    <ligand>
        <name>ATP</name>
        <dbReference type="ChEBI" id="CHEBI:30616"/>
    </ligand>
</feature>
<feature type="binding site" evidence="1">
    <location>
        <position position="761"/>
    </location>
    <ligand>
        <name>ATP</name>
        <dbReference type="ChEBI" id="CHEBI:30616"/>
    </ligand>
</feature>
<feature type="binding site" evidence="5">
    <location>
        <position position="781"/>
    </location>
    <ligand>
        <name>Mg(2+)</name>
        <dbReference type="ChEBI" id="CHEBI:18420"/>
    </ligand>
</feature>
<feature type="binding site" evidence="5">
    <location>
        <position position="784"/>
    </location>
    <ligand>
        <name>ATP</name>
        <dbReference type="ChEBI" id="CHEBI:30616"/>
    </ligand>
</feature>
<feature type="binding site" evidence="5">
    <location>
        <position position="785"/>
    </location>
    <ligand>
        <name>ATP</name>
        <dbReference type="ChEBI" id="CHEBI:30616"/>
    </ligand>
</feature>
<feature type="binding site" evidence="3">
    <location>
        <position position="785"/>
    </location>
    <ligand>
        <name>Mg(2+)</name>
        <dbReference type="ChEBI" id="CHEBI:18420"/>
    </ligand>
</feature>
<feature type="site" description="Involved in the recognition of the lipid substrate on the exoplasmic side" evidence="11">
    <location>
        <position position="331"/>
    </location>
</feature>
<feature type="site" description="Involved in the release of the transported lipid into the cytosolic leaflet" evidence="11">
    <location>
        <position position="336"/>
    </location>
</feature>
<feature type="modified residue" description="Phosphothreonine" evidence="2">
    <location>
        <position position="5"/>
    </location>
</feature>
<feature type="mutagenesis site" description="Enhances substrate affinities. Reduces considerably the Vmax." evidence="11">
    <original>F</original>
    <variation>A</variation>
    <location>
        <position position="60"/>
    </location>
</feature>
<feature type="mutagenesis site" description="Does not affect Vmax. Does not affect the apparent affinities for the substrates. Does not affect the phosphorylation rate." evidence="11">
    <original>L</original>
    <variation>A</variation>
    <location>
        <position position="84"/>
    </location>
</feature>
<feature type="mutagenesis site" description="Reduces approximately twofold the apparent affinity for PS. Does not affect the apparent affinity for PE." evidence="11">
    <original>I</original>
    <variation>A</variation>
    <location>
        <position position="87"/>
    </location>
</feature>
<feature type="mutagenesis site" description="Decreases TMEM30A glycosylation. Does not affect velocity of ATP hydrolyze of P4-ATPase flippase complex. Reduces markedly the flipping activity." evidence="12">
    <original>E</original>
    <variation>A</variation>
    <location>
        <position position="98"/>
    </location>
</feature>
<feature type="mutagenesis site" description="Reduces flipping of PS; reduces ATPAse activity by 3-fold." evidence="10">
    <original>D</original>
    <variation>T</variation>
    <location>
        <position position="168"/>
    </location>
</feature>
<feature type="mutagenesis site" description="Slightly reverses flipping of PS, no ATPase activity. Abolishes the transient current establishes in the presence of ATP and the negatively charged lipid substrate phosphatidylserine." evidence="10 13">
    <original>E</original>
    <variation>Q</variation>
    <location>
        <position position="170"/>
    </location>
</feature>
<feature type="mutagenesis site" description="Decreases TMEM30A glycosylation. Does not affect velocity of ATP hydrolyze of P4-ATPase flippase complex." evidence="12">
    <original>I</original>
    <variation>A</variation>
    <location>
        <position position="277"/>
    </location>
</feature>
<feature type="mutagenesis site" description="Does not affect affinity for PS." evidence="11">
    <original>F</original>
    <variation>A</variation>
    <location>
        <position position="326"/>
    </location>
</feature>
<feature type="mutagenesis site" description="Does not affect affinity for PS." evidence="11">
    <original>Y</original>
    <variation>A</variation>
    <location>
        <position position="330"/>
    </location>
</feature>
<feature type="mutagenesis site" description="Dramatically reduces the maximal velocity (Vmax) to 11% that of the wild type (WT) for PS and 9% for PE. Reduces approximately sixfold the apparent affinity for PS and PE. Strongly reduces ATPase activity. Loss of the PS flipping. Enhances approximately threefold the phosphorylation rate. Reduces highly the apparent affinity for vanadate." evidence="11">
    <original>N</original>
    <variation>A</variation>
    <location>
        <position position="331"/>
    </location>
</feature>
<feature type="mutagenesis site" description="Increases the apparent affinity for PS. Reduces approximately twofold the PS flipping rate relative to the WT. Does not affect the phosphorylation rate." evidence="11">
    <original>N</original>
    <variation>A</variation>
    <location>
        <position position="332"/>
    </location>
</feature>
<feature type="mutagenesis site" description="Does not affect affinity for PS. Decreases TMEM30A glycosylation. Does not affect velocity of ATP hydrolyze of P4-ATPase flippase complex. Reduces markedly the flipping activity." evidence="11 12">
    <original>L</original>
    <variation>A</variation>
    <location>
        <position position="333"/>
    </location>
</feature>
<feature type="mutagenesis site" description="Increases the apparent affinity for PS." evidence="11">
    <original>I</original>
    <variation>A</variation>
    <location>
        <position position="334"/>
    </location>
</feature>
<feature type="mutagenesis site" description="Decreases flipping activity of 20%. Phosphatidylserine stimulates the ATPase activity to maximum levels of 59% of the wild type level. Phosphatityletanolamine (PE)-stimulated maximum activity is only 16% of wild type. The phosphorylation rates is fourfold reduced. Enhances approximately twofold the apparent affinity for PS. Increases significantly apparent vanadate affinity. Strongly interferes with the electrogenic lipid translocation." evidence="13">
    <original>I</original>
    <variation>A</variation>
    <location>
        <position position="336"/>
    </location>
</feature>
<feature type="mutagenesis site" description="Loss of flipping activity. PS- and PE-stimulated activity is very low. Does not affect the phosphorylation rates. Substantially reduces the apparent affinity for PS. Only slightly reduced vanadate affinity." evidence="11">
    <original>I</original>
    <variation>E</variation>
    <location>
        <position position="336"/>
    </location>
</feature>
<feature type="mutagenesis site" description="Loss of flipping activity. PS- and PE-stimulated activity is very low. The phosphorylation rates is fourfold reduced. Substantially reduces the apparent affinity for PS. Does not affect vanadate affinity." evidence="11">
    <original>I</original>
    <variation>F</variation>
    <location>
        <position position="336"/>
    </location>
</feature>
<feature type="mutagenesis site" description="Loss of flipping activity. PS- and PE-stimulated activity is very low. The phosphorylation rates is twofold reduced. Substantially reduces the apparent affinity for PS. Markedly reduced vanadate affinity." evidence="11">
    <original>I</original>
    <variation>M</variation>
    <location>
        <position position="336"/>
    </location>
</feature>
<feature type="mutagenesis site" description="Decreases flipping activity of about 90%. PS- and PE-stimulated activity is very low. The phosphorylation rates is twofold reduced. Reduces markedly reduced vanadate affinity." evidence="11">
    <original>I</original>
    <variation>Q</variation>
    <location>
        <position position="336"/>
    </location>
</feature>
<feature type="mutagenesis site" description="Decreases flipping activity of 70%. Phosphatidylserine (PS) stimulates the ATPase activity to maximum levels of 43% of the wild type level. Phosphatityletanolamine (PE)-stimulated maximum activity is only 22% of wild type. The phosphorylation rates is fourfold reduced. Enhances approximately twofold the apparent affinity for PS. Increases significantly apparent vanadate affinity." evidence="11">
    <original>I</original>
    <variation>S</variation>
    <location>
        <position position="336"/>
    </location>
</feature>
<feature type="mutagenesis site" description="Reduces significantly affinity for PS. Reduces apparent affinity for PE." evidence="11">
    <original>S</original>
    <variation>A</variation>
    <location>
        <position position="337"/>
    </location>
</feature>
<feature type="mutagenesis site" description="Decreases TMEM30A glycosylation. Does not affect velocity of ATP hydrolyze of P4-ATPase flippase complex." evidence="12">
    <original>L</original>
    <variation>A</variation>
    <location>
        <position position="338"/>
    </location>
</feature>
<feature type="mutagenesis site" description="Reduces significantly affinity for PS. Does not affect apparent affinity for PE." evidence="11">
    <original>L</original>
    <variation>A</variation>
    <location>
        <position position="339"/>
    </location>
</feature>
<feature type="mutagenesis site" description="Does not affect velocity of ATP hydrolyze of P4-ATPase flippase complex. Reduces markedly the flipping activity." evidence="12">
    <original>L</original>
    <variation>F</variation>
    <location>
        <position position="339"/>
    </location>
</feature>
<feature type="mutagenesis site" description="Increases the apparent affinity for PS." evidence="11">
    <original>T</original>
    <variation>A</variation>
    <location>
        <position position="341"/>
    </location>
</feature>
<feature type="mutagenesis site" description="Does not affect affinity for PS." evidence="11">
    <original>E</original>
    <variation>Q</variation>
    <location>
        <position position="343"/>
    </location>
</feature>
<feature type="mutagenesis site" description="Does not affect affinity for PS." evidence="11">
    <original>K</original>
    <variation>A</variation>
    <location>
        <position position="346"/>
    </location>
</feature>
<feature type="mutagenesis site" description="Abolishes ATPAse activity." evidence="10">
    <original>D</original>
    <variation>N</variation>
    <location>
        <position position="388"/>
    </location>
</feature>
<feature type="mutagenesis site" description="No effect on flipping of PS and ATPase activity." evidence="10">
    <original>K</original>
    <variation>A</variation>
    <location>
        <position position="837"/>
    </location>
</feature>
<feature type="mutagenesis site" description="Greatly reduces flipping of PS; reduces affinity PS by 7- and 8-fold; for reduces ATPase activity by 30- and 70-fold; reduces PS-activated dephosphorylation of intermediate; reduces affinity to vanadate." evidence="10">
    <original>K</original>
    <variation>A</variation>
    <location>
        <position position="845"/>
    </location>
</feature>
<feature type="mutagenesis site" description="Greatly reduces flipping of PS; reduces affinity PS by 7- and 8-fold; for reduces ATPase activity by 30- and 70-fold." evidence="10">
    <original>K</original>
    <variation>E</variation>
    <location>
        <position position="845"/>
    </location>
</feature>
<feature type="mutagenesis site" description="Reduces flipping of PS; reduces affinity PS by 4-fold; reduces ATPase activity by 10-fold." evidence="10">
    <original>K</original>
    <variation>R</variation>
    <location>
        <position position="845"/>
    </location>
</feature>
<feature type="mutagenesis site" description="Reduces flipping of PS; reduces affinity PS by 3-fold; reduces ATPase activity by 10-fold." evidence="10">
    <original>N</original>
    <variation>A</variation>
    <location>
        <position position="846"/>
    </location>
</feature>
<feature type="mutagenesis site" description="Decreases TMEM30A glycosylation. Does not affect velocity of ATP hydrolyze of P4-ATPase flippase complex." evidence="12">
    <original>Y</original>
    <variation>A</variation>
    <location>
        <position position="850"/>
    </location>
</feature>
<gene>
    <name evidence="4" type="primary">ATP8A2</name>
</gene>
<name>AT8A2_BOVIN</name>
<comment type="function">
    <text evidence="4 8 9 11 12 13">Catalytic component of a P4-ATPase flippase complex which catalyzes the hydrolysis of ATP coupled to the transport of aminophospholipids from the outer to the inner leaflet of various membranes and ensures the maintenance of asymmetric distribution of phospholipids (PubMed:19778899, PubMed:24706822, PubMed:26592152, PubMed:31371510). Able to translocate phosphatidylserine, but not phosphatidylcholine (By similarity). Phospholipid translocation seems also to be implicated in vesicle formation and in uptake of lipid signaling molecules. Reconstituted to liposomes, the ATP8A2:TMEM30A flippase complex predominantly transports phosphatidylserine (PS) and to a lesser extent phosphatidylethanolamine (PE) (PubMed:19778899, PubMed:24706822, PubMed:26592152, PubMed:31371510). Phospholipid translocation is not associated with a countertransport of an inorganic ion or other charged substrate from the cytoplasmic side toward the exoplasm in connection with the phosphorylation from ATP (PubMed:31371510). ATP8A2:TMEM30A may be involved in regulation of neurite outgrowth. Proposed to function in the generation and maintenance of phospholipid asymmetry in photoreceptor disk membranes and neuronal axon membranes. May be involved in vesicle trafficking in neuronal cells. Required for normal visual and auditory function; involved in photoreceptor and inner ear spiral ganglion cell survival.</text>
</comment>
<comment type="catalytic activity">
    <reaction evidence="8 10 11 12 13">
        <text>ATP + H2O + phospholipidSide 1 = ADP + phosphate + phospholipidSide 2.</text>
        <dbReference type="EC" id="7.6.2.1"/>
    </reaction>
</comment>
<comment type="catalytic activity">
    <reaction evidence="8 11 12 13">
        <text>a 1,2-diacyl-sn-glycero-3-phospho-L-serine(out) + ATP + H2O = a 1,2-diacyl-sn-glycero-3-phospho-L-serine(in) + ADP + phosphate + H(+)</text>
        <dbReference type="Rhea" id="RHEA:38567"/>
        <dbReference type="ChEBI" id="CHEBI:15377"/>
        <dbReference type="ChEBI" id="CHEBI:15378"/>
        <dbReference type="ChEBI" id="CHEBI:30616"/>
        <dbReference type="ChEBI" id="CHEBI:43474"/>
        <dbReference type="ChEBI" id="CHEBI:57262"/>
        <dbReference type="ChEBI" id="CHEBI:456216"/>
    </reaction>
    <physiologicalReaction direction="left-to-right" evidence="8 11 12 13">
        <dbReference type="Rhea" id="RHEA:38568"/>
    </physiologicalReaction>
</comment>
<comment type="catalytic activity">
    <reaction evidence="11">
        <text>a 1,2-diacyl-sn-glycero-3-phosphoethanolamine(in) + ATP + H2O = a 1,2-diacyl-sn-glycero-3-phosphoethanolamine(out) + ADP + phosphate + H(+)</text>
        <dbReference type="Rhea" id="RHEA:36439"/>
        <dbReference type="ChEBI" id="CHEBI:15377"/>
        <dbReference type="ChEBI" id="CHEBI:15378"/>
        <dbReference type="ChEBI" id="CHEBI:30616"/>
        <dbReference type="ChEBI" id="CHEBI:43474"/>
        <dbReference type="ChEBI" id="CHEBI:64612"/>
        <dbReference type="ChEBI" id="CHEBI:456216"/>
    </reaction>
    <physiologicalReaction direction="left-to-right" evidence="17">
        <dbReference type="Rhea" id="RHEA:36440"/>
    </physiologicalReaction>
</comment>
<comment type="cofactor">
    <cofactor evidence="5">
        <name>Mg(2+)</name>
        <dbReference type="ChEBI" id="CHEBI:18420"/>
    </cofactor>
</comment>
<comment type="activity regulation">
    <text evidence="8">ATPase activity is stimulated by phosphatidylserine (PS) and minimally by phosphatidylethanolamine (PE). ATPase activity is inhibited by N-ethylmaleimide (NEM) and vanadate. Flippase activity is inhibited by NEM and 1,2-dioleoyl-sn-glycero-3-phospho-L-serine (DOPS).</text>
</comment>
<comment type="subunit">
    <text evidence="9 12">Component of a P4-ATPase flippase complex which consists of a catalytic alpha subunit and an accessory beta subunit (PubMed:21454556, PubMed:26592152). Interacts with TMEM30A to form a flippase complex (PubMed:21454556).</text>
</comment>
<comment type="subcellular location">
    <subcellularLocation>
        <location evidence="15 16">Membrane</location>
        <topology evidence="6">Multi-pass membrane protein</topology>
    </subcellularLocation>
    <subcellularLocation>
        <location evidence="2">Golgi apparatus membrane</location>
    </subcellularLocation>
    <subcellularLocation>
        <location evidence="2">Endosome membrane</location>
    </subcellularLocation>
    <subcellularLocation>
        <location evidence="2">Cell membrane</location>
    </subcellularLocation>
    <subcellularLocation>
        <location evidence="8 9">Photoreceptor outer segment membrane</location>
    </subcellularLocation>
    <subcellularLocation>
        <location evidence="9">Photoreceptor inner segment membrane</location>
    </subcellularLocation>
    <text evidence="2 9">Localizes to the Golgi and endosomes in photoreceptor cells (By similarity). Localizes to disk membranes of rod photoreceptor outer segments (ROS) (PubMed:21454556).</text>
</comment>
<comment type="tissue specificity">
    <text evidence="8">Expressed in retinal photoreceptor cells and testis.</text>
</comment>
<comment type="similarity">
    <text evidence="14">Belongs to the cation transport ATPase (P-type) (TC 3.A.3) family. Type IV subfamily.</text>
</comment>
<comment type="sequence caution" evidence="14">
    <conflict type="erroneous initiation">
        <sequence resource="EMBL-CDS" id="ACT46164"/>
    </conflict>
    <text>Extended N-terminus.</text>
</comment>